<keyword id="KW-0329">Glyoxylate bypass</keyword>
<keyword id="KW-0460">Magnesium</keyword>
<keyword id="KW-0464">Manganese</keyword>
<keyword id="KW-0479">Metal-binding</keyword>
<keyword id="KW-0521">NADP</keyword>
<keyword id="KW-0560">Oxidoreductase</keyword>
<keyword id="KW-1185">Reference proteome</keyword>
<keyword id="KW-0816">Tricarboxylic acid cycle</keyword>
<organism>
    <name type="scientific">Mycobacterium tuberculosis (strain CDC 1551 / Oshkosh)</name>
    <dbReference type="NCBI Taxonomy" id="83331"/>
    <lineage>
        <taxon>Bacteria</taxon>
        <taxon>Bacillati</taxon>
        <taxon>Actinomycetota</taxon>
        <taxon>Actinomycetes</taxon>
        <taxon>Mycobacteriales</taxon>
        <taxon>Mycobacteriaceae</taxon>
        <taxon>Mycobacterium</taxon>
        <taxon>Mycobacterium tuberculosis complex</taxon>
    </lineage>
</organism>
<dbReference type="EC" id="1.1.1.42" evidence="2"/>
<dbReference type="EMBL" id="AE000516">
    <property type="protein sequence ID" value="AAK47786.1"/>
    <property type="molecule type" value="Genomic_DNA"/>
</dbReference>
<dbReference type="PIR" id="B70846">
    <property type="entry name" value="B70846"/>
</dbReference>
<dbReference type="RefSeq" id="WP_003417452.1">
    <property type="nucleotide sequence ID" value="NZ_KK341227.1"/>
</dbReference>
<dbReference type="SMR" id="P9WKL0"/>
<dbReference type="KEGG" id="mtc:MT3442"/>
<dbReference type="PATRIC" id="fig|83331.31.peg.3702"/>
<dbReference type="HOGENOM" id="CLU_023296_1_1_11"/>
<dbReference type="Proteomes" id="UP000001020">
    <property type="component" value="Chromosome"/>
</dbReference>
<dbReference type="GO" id="GO:0004450">
    <property type="term" value="F:isocitrate dehydrogenase (NADP+) activity"/>
    <property type="evidence" value="ECO:0007669"/>
    <property type="project" value="UniProtKB-EC"/>
</dbReference>
<dbReference type="GO" id="GO:0000287">
    <property type="term" value="F:magnesium ion binding"/>
    <property type="evidence" value="ECO:0007669"/>
    <property type="project" value="InterPro"/>
</dbReference>
<dbReference type="GO" id="GO:0051287">
    <property type="term" value="F:NAD binding"/>
    <property type="evidence" value="ECO:0007669"/>
    <property type="project" value="InterPro"/>
</dbReference>
<dbReference type="GO" id="GO:0006097">
    <property type="term" value="P:glyoxylate cycle"/>
    <property type="evidence" value="ECO:0007669"/>
    <property type="project" value="UniProtKB-KW"/>
</dbReference>
<dbReference type="GO" id="GO:0006102">
    <property type="term" value="P:isocitrate metabolic process"/>
    <property type="evidence" value="ECO:0007669"/>
    <property type="project" value="InterPro"/>
</dbReference>
<dbReference type="GO" id="GO:0006099">
    <property type="term" value="P:tricarboxylic acid cycle"/>
    <property type="evidence" value="ECO:0007669"/>
    <property type="project" value="UniProtKB-KW"/>
</dbReference>
<dbReference type="FunFam" id="3.40.718.10:FF:000018">
    <property type="entry name" value="Isocitrate dehydrogenase [NADP]"/>
    <property type="match status" value="1"/>
</dbReference>
<dbReference type="Gene3D" id="3.40.718.10">
    <property type="entry name" value="Isopropylmalate Dehydrogenase"/>
    <property type="match status" value="1"/>
</dbReference>
<dbReference type="InterPro" id="IPR019818">
    <property type="entry name" value="IsoCit/isopropylmalate_DH_CS"/>
</dbReference>
<dbReference type="InterPro" id="IPR004790">
    <property type="entry name" value="Isocitrate_DH_NADP"/>
</dbReference>
<dbReference type="InterPro" id="IPR024084">
    <property type="entry name" value="IsoPropMal-DH-like_dom"/>
</dbReference>
<dbReference type="NCBIfam" id="TIGR00127">
    <property type="entry name" value="nadp_idh_euk"/>
    <property type="match status" value="1"/>
</dbReference>
<dbReference type="NCBIfam" id="NF006156">
    <property type="entry name" value="PRK08299.1"/>
    <property type="match status" value="1"/>
</dbReference>
<dbReference type="PANTHER" id="PTHR11822:SF21">
    <property type="entry name" value="ISOCITRATE DEHYDROGENASE [NADP], MITOCHONDRIAL"/>
    <property type="match status" value="1"/>
</dbReference>
<dbReference type="PANTHER" id="PTHR11822">
    <property type="entry name" value="NADP-SPECIFIC ISOCITRATE DEHYDROGENASE"/>
    <property type="match status" value="1"/>
</dbReference>
<dbReference type="Pfam" id="PF00180">
    <property type="entry name" value="Iso_dh"/>
    <property type="match status" value="1"/>
</dbReference>
<dbReference type="PIRSF" id="PIRSF000108">
    <property type="entry name" value="IDH_NADP"/>
    <property type="match status" value="1"/>
</dbReference>
<dbReference type="SMART" id="SM01329">
    <property type="entry name" value="Iso_dh"/>
    <property type="match status" value="1"/>
</dbReference>
<dbReference type="SUPFAM" id="SSF53659">
    <property type="entry name" value="Isocitrate/Isopropylmalate dehydrogenase-like"/>
    <property type="match status" value="1"/>
</dbReference>
<dbReference type="PROSITE" id="PS00470">
    <property type="entry name" value="IDH_IMDH"/>
    <property type="match status" value="1"/>
</dbReference>
<accession>P9WKL0</accession>
<accession>L0TFB7</accession>
<accession>O53389</accession>
<accession>P65097</accession>
<proteinExistence type="inferred from homology"/>
<protein>
    <recommendedName>
        <fullName evidence="2">Isocitrate dehydrogenase [NADP] 1</fullName>
        <shortName evidence="2">ICDH-1</shortName>
        <shortName evidence="2">IDH 1</shortName>
        <ecNumber evidence="2">1.1.1.42</ecNumber>
    </recommendedName>
    <alternativeName>
        <fullName>IDP</fullName>
    </alternativeName>
    <alternativeName>
        <fullName>NADP(+)-specific ICDH</fullName>
    </alternativeName>
    <alternativeName>
        <fullName>Oxalosuccinate decarboxylase</fullName>
    </alternativeName>
</protein>
<feature type="chain" id="PRO_0000427635" description="Isocitrate dehydrogenase [NADP] 1">
    <location>
        <begin position="1"/>
        <end position="409"/>
    </location>
</feature>
<feature type="binding site" evidence="2">
    <location>
        <position position="75"/>
    </location>
    <ligand>
        <name>NADP(+)</name>
        <dbReference type="ChEBI" id="CHEBI:58349"/>
    </ligand>
</feature>
<feature type="binding site" evidence="2">
    <location>
        <position position="78"/>
    </location>
    <ligand>
        <name>NADP(+)</name>
        <dbReference type="ChEBI" id="CHEBI:58349"/>
    </ligand>
</feature>
<feature type="binding site" evidence="2">
    <location>
        <position position="80"/>
    </location>
    <ligand>
        <name>NADP(+)</name>
        <dbReference type="ChEBI" id="CHEBI:58349"/>
    </ligand>
</feature>
<feature type="binding site" evidence="2">
    <location>
        <position position="85"/>
    </location>
    <ligand>
        <name>NADP(+)</name>
        <dbReference type="ChEBI" id="CHEBI:58349"/>
    </ligand>
</feature>
<feature type="binding site" evidence="2">
    <location>
        <position position="255"/>
    </location>
    <ligand>
        <name>Mn(2+)</name>
        <dbReference type="ChEBI" id="CHEBI:29035"/>
    </ligand>
</feature>
<feature type="binding site" evidence="2">
    <location>
        <position position="278"/>
    </location>
    <ligand>
        <name>Mn(2+)</name>
        <dbReference type="ChEBI" id="CHEBI:29035"/>
    </ligand>
</feature>
<feature type="binding site" evidence="2">
    <location>
        <position position="282"/>
    </location>
    <ligand>
        <name>Mn(2+)</name>
        <dbReference type="ChEBI" id="CHEBI:29035"/>
    </ligand>
</feature>
<feature type="binding site" evidence="2">
    <location>
        <position position="313"/>
    </location>
    <ligand>
        <name>NADP(+)</name>
        <dbReference type="ChEBI" id="CHEBI:58349"/>
    </ligand>
</feature>
<feature type="binding site" evidence="2">
    <location>
        <position position="314"/>
    </location>
    <ligand>
        <name>NADP(+)</name>
        <dbReference type="ChEBI" id="CHEBI:58349"/>
    </ligand>
</feature>
<feature type="binding site" evidence="2">
    <location>
        <position position="315"/>
    </location>
    <ligand>
        <name>NADP(+)</name>
        <dbReference type="ChEBI" id="CHEBI:58349"/>
    </ligand>
</feature>
<feature type="binding site" evidence="2">
    <location>
        <position position="318"/>
    </location>
    <ligand>
        <name>NADP(+)</name>
        <dbReference type="ChEBI" id="CHEBI:58349"/>
    </ligand>
</feature>
<feature type="binding site" evidence="2">
    <location>
        <position position="331"/>
    </location>
    <ligand>
        <name>NADP(+)</name>
        <dbReference type="ChEBI" id="CHEBI:58349"/>
    </ligand>
</feature>
<feature type="site" description="Critical for catalysis" evidence="1">
    <location>
        <position position="142"/>
    </location>
</feature>
<feature type="site" description="Critical for catalysis" evidence="1">
    <location>
        <position position="215"/>
    </location>
</feature>
<name>IDH1_MYCTO</name>
<comment type="function">
    <text evidence="2">Catalyzes the oxidative decarboxylation of isocitrate to 2-oxoglutarate and carbon dioxide with the concomitant reduction of NADP(+).</text>
</comment>
<comment type="catalytic activity">
    <reaction evidence="2">
        <text>D-threo-isocitrate + NADP(+) = 2-oxoglutarate + CO2 + NADPH</text>
        <dbReference type="Rhea" id="RHEA:19629"/>
        <dbReference type="ChEBI" id="CHEBI:15562"/>
        <dbReference type="ChEBI" id="CHEBI:16526"/>
        <dbReference type="ChEBI" id="CHEBI:16810"/>
        <dbReference type="ChEBI" id="CHEBI:57783"/>
        <dbReference type="ChEBI" id="CHEBI:58349"/>
        <dbReference type="EC" id="1.1.1.42"/>
    </reaction>
</comment>
<comment type="cofactor">
    <cofactor evidence="2">
        <name>Mg(2+)</name>
        <dbReference type="ChEBI" id="CHEBI:18420"/>
    </cofactor>
    <cofactor evidence="2">
        <name>Mn(2+)</name>
        <dbReference type="ChEBI" id="CHEBI:29035"/>
    </cofactor>
    <text evidence="2">Binds 1 Mg(2+) or Mn(2+) ion per subunit.</text>
</comment>
<comment type="subunit">
    <text evidence="2">Homodimer.</text>
</comment>
<comment type="similarity">
    <text evidence="3">Belongs to the isocitrate and isopropylmalate dehydrogenases family.</text>
</comment>
<evidence type="ECO:0000250" key="1">
    <source>
        <dbReference type="UniProtKB" id="P08200"/>
    </source>
</evidence>
<evidence type="ECO:0000250" key="2">
    <source>
        <dbReference type="UniProtKB" id="P9WKL1"/>
    </source>
</evidence>
<evidence type="ECO:0000305" key="3"/>
<sequence>MSNAPKIKVSGPVVELDGDEMTRVIWKLIKDMLILPYLDIRLDYYDLGIEHRDATDDQVTIDAAYAIKKHGVGVKCATITPDEARVEEFNLKKMWLSPNGTIRNILGGTIFREPIVISNVPRLVPGWTKPIVIGRHAFGDQYRATNFKVDQPGTVTLTFTPADGSAPIVHEMVSIPEDGGVVLGMYNFKESIRDFARASFSYGLNAKWPVYLSTKNTILKAYDGMFKDEFERVYEEEFKAQFEAAGLTYEHRLIDDMVAACLKWEGGYVWACKNYDGDVQSDTVAQGYGSLGLMTSVLMTADGKTVEAEAAHGTVTRHYRQYQAGKPTSTNPIASIFAWTRGLQHRGKLDGTPEVIDFAHKLESVVIATVESGKMTKDLAILIGPEQDWLNSEEFLDAIADNLEKELAN</sequence>
<reference key="1">
    <citation type="journal article" date="2002" name="J. Bacteriol.">
        <title>Whole-genome comparison of Mycobacterium tuberculosis clinical and laboratory strains.</title>
        <authorList>
            <person name="Fleischmann R.D."/>
            <person name="Alland D."/>
            <person name="Eisen J.A."/>
            <person name="Carpenter L."/>
            <person name="White O."/>
            <person name="Peterson J.D."/>
            <person name="DeBoy R.T."/>
            <person name="Dodson R.J."/>
            <person name="Gwinn M.L."/>
            <person name="Haft D.H."/>
            <person name="Hickey E.K."/>
            <person name="Kolonay J.F."/>
            <person name="Nelson W.C."/>
            <person name="Umayam L.A."/>
            <person name="Ermolaeva M.D."/>
            <person name="Salzberg S.L."/>
            <person name="Delcher A."/>
            <person name="Utterback T.R."/>
            <person name="Weidman J.F."/>
            <person name="Khouri H.M."/>
            <person name="Gill J."/>
            <person name="Mikula A."/>
            <person name="Bishai W."/>
            <person name="Jacobs W.R. Jr."/>
            <person name="Venter J.C."/>
            <person name="Fraser C.M."/>
        </authorList>
    </citation>
    <scope>NUCLEOTIDE SEQUENCE [LARGE SCALE GENOMIC DNA]</scope>
    <source>
        <strain>CDC 1551 / Oshkosh</strain>
    </source>
</reference>
<gene>
    <name type="primary">icd</name>
    <name type="ordered locus">MT3442</name>
</gene>